<organism>
    <name type="scientific">Conus regius</name>
    <name type="common">Crown cone</name>
    <dbReference type="NCBI Taxonomy" id="101314"/>
    <lineage>
        <taxon>Eukaryota</taxon>
        <taxon>Metazoa</taxon>
        <taxon>Spiralia</taxon>
        <taxon>Lophotrochozoa</taxon>
        <taxon>Mollusca</taxon>
        <taxon>Gastropoda</taxon>
        <taxon>Caenogastropoda</taxon>
        <taxon>Neogastropoda</taxon>
        <taxon>Conoidea</taxon>
        <taxon>Conidae</taxon>
        <taxon>Conus</taxon>
        <taxon>Stephanoconus</taxon>
    </lineage>
</organism>
<reference key="1">
    <citation type="journal article" date="2017" name="FEBS J.">
        <title>Structural plasticity of Mini-M conotoxins: expression of all mini-M subtypes by Conus regius.</title>
        <authorList>
            <person name="Franco A."/>
            <person name="Dovell S."/>
            <person name="Moller C."/>
            <person name="Grandal M."/>
            <person name="Clark E."/>
            <person name="Mari F."/>
        </authorList>
    </citation>
    <scope>NUCLEOTIDE SEQUENCE [MRNA]</scope>
    <scope>PROTEIN SEQUENCE OF 49-64</scope>
    <scope>MASS SPECTROMETRY</scope>
    <scope>SUBCELLULAR LOCATION</scope>
    <scope>HYDROXYLATION AT PRO-59</scope>
    <source>
        <tissue>Venom</tissue>
        <tissue>Venom duct</tissue>
    </source>
</reference>
<comment type="subcellular location">
    <subcellularLocation>
        <location evidence="3">Secreted</location>
    </subcellularLocation>
</comment>
<comment type="tissue specificity">
    <text evidence="6">Expressed by the venom duct.</text>
</comment>
<comment type="domain">
    <text evidence="5">The cysteine framework is III (CC-C-C-CC). Classified in the M-1 branch, since 1 residue stands between the fourth and the fifth cysteine residues.</text>
</comment>
<comment type="mass spectrometry"/>
<comment type="similarity">
    <text evidence="5">Belongs to the conotoxin M superfamily.</text>
</comment>
<protein>
    <recommendedName>
        <fullName evidence="4">Conotoxin reg3k</fullName>
    </recommendedName>
    <alternativeName>
        <fullName evidence="4">Reg3.1</fullName>
        <shortName evidence="7">Rg3.1</shortName>
    </alternativeName>
</protein>
<proteinExistence type="evidence at protein level"/>
<name>CM3K_CONRE</name>
<accession>A0A2I6EDL2</accession>
<feature type="signal peptide" evidence="2">
    <location>
        <begin position="1"/>
        <end position="20"/>
    </location>
</feature>
<feature type="propeptide" id="PRO_0000444768" evidence="3">
    <location>
        <begin position="21"/>
        <end position="48"/>
    </location>
</feature>
<feature type="peptide" id="PRO_5014374567" description="Conotoxin reg3k" evidence="3">
    <location>
        <begin position="49"/>
        <end position="64"/>
    </location>
</feature>
<feature type="modified residue" description="4-hydroxyproline" evidence="3">
    <location>
        <position position="59"/>
    </location>
</feature>
<feature type="disulfide bond" evidence="1">
    <location>
        <begin position="50"/>
        <end position="60"/>
    </location>
</feature>
<feature type="disulfide bond" evidence="1">
    <location>
        <begin position="51"/>
        <end position="58"/>
    </location>
</feature>
<feature type="disulfide bond" evidence="1">
    <location>
        <begin position="56"/>
        <end position="61"/>
    </location>
</feature>
<dbReference type="EMBL" id="MF588935">
    <property type="protein sequence ID" value="AUJ88059.1"/>
    <property type="molecule type" value="mRNA"/>
</dbReference>
<dbReference type="SMR" id="A0A2I6EDL2"/>
<dbReference type="GO" id="GO:0005576">
    <property type="term" value="C:extracellular region"/>
    <property type="evidence" value="ECO:0007669"/>
    <property type="project" value="UniProtKB-SubCell"/>
</dbReference>
<dbReference type="GO" id="GO:0090729">
    <property type="term" value="F:toxin activity"/>
    <property type="evidence" value="ECO:0007669"/>
    <property type="project" value="UniProtKB-KW"/>
</dbReference>
<evidence type="ECO:0000250" key="1">
    <source>
        <dbReference type="UniProtKB" id="Q5EHP3"/>
    </source>
</evidence>
<evidence type="ECO:0000255" key="2"/>
<evidence type="ECO:0000269" key="3">
    <source>
    </source>
</evidence>
<evidence type="ECO:0000303" key="4">
    <source>
    </source>
</evidence>
<evidence type="ECO:0000305" key="5"/>
<evidence type="ECO:0000305" key="6">
    <source>
    </source>
</evidence>
<evidence type="ECO:0000312" key="7">
    <source>
        <dbReference type="EMBL" id="AUJ88059.1"/>
    </source>
</evidence>
<sequence>MMFKLGVLLTICLLLFPLTALQLDWDQPGDHMLDISSEIDDRWFDPVRKCCMRPICMCPCCIGP</sequence>
<keyword id="KW-0903">Direct protein sequencing</keyword>
<keyword id="KW-1015">Disulfide bond</keyword>
<keyword id="KW-0379">Hydroxylation</keyword>
<keyword id="KW-0964">Secreted</keyword>
<keyword id="KW-0732">Signal</keyword>
<keyword id="KW-0800">Toxin</keyword>